<proteinExistence type="evidence at transcript level"/>
<gene>
    <name type="primary">Smr2</name>
</gene>
<keyword id="KW-1185">Reference proteome</keyword>
<keyword id="KW-0964">Secreted</keyword>
<keyword id="KW-0732">Signal</keyword>
<evidence type="ECO:0000255" key="1"/>
<evidence type="ECO:0000256" key="2">
    <source>
        <dbReference type="SAM" id="MobiDB-lite"/>
    </source>
</evidence>
<evidence type="ECO:0000305" key="3"/>
<name>SMR2_RAT</name>
<feature type="signal peptide" evidence="1">
    <location>
        <begin position="1"/>
        <end position="18"/>
    </location>
</feature>
<feature type="chain" id="PRO_0000013039" description="SMR2 protein">
    <location>
        <begin position="19"/>
        <end position="137"/>
    </location>
</feature>
<feature type="region of interest" description="Disordered" evidence="2">
    <location>
        <begin position="14"/>
        <end position="113"/>
    </location>
</feature>
<feature type="compositionally biased region" description="Low complexity" evidence="2">
    <location>
        <begin position="75"/>
        <end position="85"/>
    </location>
</feature>
<feature type="compositionally biased region" description="Basic and acidic residues" evidence="2">
    <location>
        <begin position="99"/>
        <end position="110"/>
    </location>
</feature>
<accession>P18897</accession>
<protein>
    <recommendedName>
        <fullName>SMR2 protein</fullName>
    </recommendedName>
</protein>
<comment type="function">
    <text>Unknown, male-specific function.</text>
</comment>
<comment type="subcellular location">
    <subcellularLocation>
        <location evidence="3">Secreted</location>
    </subcellularLocation>
</comment>
<reference key="1">
    <citation type="journal article" date="1990" name="J. Biol. Chem.">
        <title>A new member of the glutamine-rich protein gene family is characterized by the absence of internal repeats and the androgen control of its expression in the submandibular gland of rats.</title>
        <authorList>
            <person name="Rosinski-Chupin I."/>
            <person name="Rougeon F."/>
        </authorList>
    </citation>
    <scope>NUCLEOTIDE SEQUENCE [GENOMIC DNA / MRNA]</scope>
    <source>
        <strain>Wistar</strain>
        <tissue>Submandibular gland</tissue>
    </source>
</reference>
<sequence>MLVVLLTAALLALSSAQNTDEEVSNAEISDVKQQPDSDSDLPSDDVNPGNVQDHESAPAANEEPSVSPGNEQEEQQQQPLPVENQEPSDKERHRKQKRPPPETLHHRENLRPQIYRQFGIRPFGSLFPEPYRFQPWA</sequence>
<organism>
    <name type="scientific">Rattus norvegicus</name>
    <name type="common">Rat</name>
    <dbReference type="NCBI Taxonomy" id="10116"/>
    <lineage>
        <taxon>Eukaryota</taxon>
        <taxon>Metazoa</taxon>
        <taxon>Chordata</taxon>
        <taxon>Craniata</taxon>
        <taxon>Vertebrata</taxon>
        <taxon>Euteleostomi</taxon>
        <taxon>Mammalia</taxon>
        <taxon>Eutheria</taxon>
        <taxon>Euarchontoglires</taxon>
        <taxon>Glires</taxon>
        <taxon>Rodentia</taxon>
        <taxon>Myomorpha</taxon>
        <taxon>Muroidea</taxon>
        <taxon>Muridae</taxon>
        <taxon>Murinae</taxon>
        <taxon>Rattus</taxon>
    </lineage>
</organism>
<dbReference type="EMBL" id="J05490">
    <property type="protein sequence ID" value="AAA42155.1"/>
    <property type="molecule type" value="mRNA"/>
</dbReference>
<dbReference type="EMBL" id="J05491">
    <property type="protein sequence ID" value="AAA42156.1"/>
    <property type="molecule type" value="Genomic_DNA"/>
</dbReference>
<dbReference type="PIR" id="A35446">
    <property type="entry name" value="A35446"/>
</dbReference>
<dbReference type="RGD" id="619853">
    <property type="gene designation" value="Smr2"/>
</dbReference>
<dbReference type="InParanoid" id="P18897"/>
<dbReference type="PRO" id="PR:P18897"/>
<dbReference type="Proteomes" id="UP000002494">
    <property type="component" value="Unplaced"/>
</dbReference>
<dbReference type="GO" id="GO:0005576">
    <property type="term" value="C:extracellular region"/>
    <property type="evidence" value="ECO:0007669"/>
    <property type="project" value="UniProtKB-SubCell"/>
</dbReference>
<dbReference type="InterPro" id="IPR026086">
    <property type="entry name" value="Pro-rich"/>
</dbReference>
<dbReference type="Pfam" id="PF15240">
    <property type="entry name" value="Pro-rich"/>
    <property type="match status" value="1"/>
</dbReference>
<dbReference type="SMART" id="SM01412">
    <property type="entry name" value="Pro-rich"/>
    <property type="match status" value="1"/>
</dbReference>